<sequence>MCRLAKIISNAGVCSRRNAEKLIVGGKVKIDGITILSPATNVDMSNQIEVSGRLINNTQKPRLWIYYKPVGLITTHKDPLSRKTVFEQLIGLPRVISIGRLDLNSEGLLLLTNSGDLAHQFEMPASKLKRVYNVRAYGNPNILLKNNYKNLKIDGIFYNPHSIKLLRQNKSNSWFEVVLFEGKNREIRRIFEYFGLQVNKLIRIQYGALKIGNLKPGNYQEISNKILEKQLVMCF</sequence>
<organism>
    <name type="scientific">Rickettsia prowazekii (strain Madrid E)</name>
    <dbReference type="NCBI Taxonomy" id="272947"/>
    <lineage>
        <taxon>Bacteria</taxon>
        <taxon>Pseudomonadati</taxon>
        <taxon>Pseudomonadota</taxon>
        <taxon>Alphaproteobacteria</taxon>
        <taxon>Rickettsiales</taxon>
        <taxon>Rickettsiaceae</taxon>
        <taxon>Rickettsieae</taxon>
        <taxon>Rickettsia</taxon>
        <taxon>typhus group</taxon>
    </lineage>
</organism>
<accession>Q9ZD06</accession>
<gene>
    <name type="ordered locus">RP544</name>
</gene>
<keyword id="KW-0413">Isomerase</keyword>
<keyword id="KW-1185">Reference proteome</keyword>
<keyword id="KW-0694">RNA-binding</keyword>
<protein>
    <recommendedName>
        <fullName>Uncharacterized RNA pseudouridine synthase RP544</fullName>
        <ecNumber>5.4.99.-</ecNumber>
    </recommendedName>
    <alternativeName>
        <fullName>RNA pseudouridylate synthase</fullName>
    </alternativeName>
    <alternativeName>
        <fullName>RNA-uridine isomerase</fullName>
    </alternativeName>
</protein>
<proteinExistence type="inferred from homology"/>
<name>Y544_RICPR</name>
<feature type="chain" id="PRO_0000100032" description="Uncharacterized RNA pseudouridine synthase RP544">
    <location>
        <begin position="1"/>
        <end position="235"/>
    </location>
</feature>
<feature type="domain" description="S4 RNA-binding" evidence="2">
    <location>
        <begin position="2"/>
        <end position="69"/>
    </location>
</feature>
<feature type="active site" description="Nucleophile" evidence="1">
    <location>
        <position position="102"/>
    </location>
</feature>
<reference key="1">
    <citation type="journal article" date="1998" name="Nature">
        <title>The genome sequence of Rickettsia prowazekii and the origin of mitochondria.</title>
        <authorList>
            <person name="Andersson S.G.E."/>
            <person name="Zomorodipour A."/>
            <person name="Andersson J.O."/>
            <person name="Sicheritz-Ponten T."/>
            <person name="Alsmark U.C.M."/>
            <person name="Podowski R.M."/>
            <person name="Naeslund A.K."/>
            <person name="Eriksson A.-S."/>
            <person name="Winkler H.H."/>
            <person name="Kurland C.G."/>
        </authorList>
    </citation>
    <scope>NUCLEOTIDE SEQUENCE [LARGE SCALE GENOMIC DNA]</scope>
    <source>
        <strain>Madrid E</strain>
    </source>
</reference>
<comment type="catalytic activity">
    <reaction>
        <text>a uridine in RNA = a pseudouridine in RNA</text>
        <dbReference type="Rhea" id="RHEA:48348"/>
        <dbReference type="Rhea" id="RHEA-COMP:12068"/>
        <dbReference type="Rhea" id="RHEA-COMP:12069"/>
        <dbReference type="ChEBI" id="CHEBI:65314"/>
        <dbReference type="ChEBI" id="CHEBI:65315"/>
    </reaction>
</comment>
<comment type="similarity">
    <text evidence="3">Belongs to the pseudouridine synthase RsuA family.</text>
</comment>
<evidence type="ECO:0000250" key="1"/>
<evidence type="ECO:0000255" key="2">
    <source>
        <dbReference type="PROSITE-ProRule" id="PRU00182"/>
    </source>
</evidence>
<evidence type="ECO:0000305" key="3"/>
<dbReference type="EC" id="5.4.99.-"/>
<dbReference type="EMBL" id="AJ235272">
    <property type="protein sequence ID" value="CAA14993.1"/>
    <property type="molecule type" value="Genomic_DNA"/>
</dbReference>
<dbReference type="PIR" id="G71658">
    <property type="entry name" value="G71658"/>
</dbReference>
<dbReference type="RefSeq" id="NP_220917.1">
    <property type="nucleotide sequence ID" value="NC_000963.1"/>
</dbReference>
<dbReference type="RefSeq" id="WP_004597835.1">
    <property type="nucleotide sequence ID" value="NC_000963.1"/>
</dbReference>
<dbReference type="SMR" id="Q9ZD06"/>
<dbReference type="STRING" id="272947.gene:17555624"/>
<dbReference type="EnsemblBacteria" id="CAA14993">
    <property type="protein sequence ID" value="CAA14993"/>
    <property type="gene ID" value="CAA14993"/>
</dbReference>
<dbReference type="KEGG" id="rpr:RP544"/>
<dbReference type="PATRIC" id="fig|272947.5.peg.555"/>
<dbReference type="eggNOG" id="COG1187">
    <property type="taxonomic scope" value="Bacteria"/>
</dbReference>
<dbReference type="HOGENOM" id="CLU_024979_1_0_5"/>
<dbReference type="OrthoDB" id="9807213at2"/>
<dbReference type="Proteomes" id="UP000002480">
    <property type="component" value="Chromosome"/>
</dbReference>
<dbReference type="GO" id="GO:0003723">
    <property type="term" value="F:RNA binding"/>
    <property type="evidence" value="ECO:0007669"/>
    <property type="project" value="UniProtKB-KW"/>
</dbReference>
<dbReference type="GO" id="GO:0120159">
    <property type="term" value="F:rRNA pseudouridine synthase activity"/>
    <property type="evidence" value="ECO:0007669"/>
    <property type="project" value="UniProtKB-ARBA"/>
</dbReference>
<dbReference type="GO" id="GO:0000455">
    <property type="term" value="P:enzyme-directed rRNA pseudouridine synthesis"/>
    <property type="evidence" value="ECO:0007669"/>
    <property type="project" value="UniProtKB-ARBA"/>
</dbReference>
<dbReference type="CDD" id="cd02556">
    <property type="entry name" value="PseudoU_synth_RluB"/>
    <property type="match status" value="1"/>
</dbReference>
<dbReference type="CDD" id="cd00165">
    <property type="entry name" value="S4"/>
    <property type="match status" value="1"/>
</dbReference>
<dbReference type="Gene3D" id="3.30.70.1560">
    <property type="entry name" value="Alpha-L RNA-binding motif"/>
    <property type="match status" value="1"/>
</dbReference>
<dbReference type="Gene3D" id="3.30.70.580">
    <property type="entry name" value="Pseudouridine synthase I, catalytic domain, N-terminal subdomain"/>
    <property type="match status" value="1"/>
</dbReference>
<dbReference type="Gene3D" id="3.10.290.10">
    <property type="entry name" value="RNA-binding S4 domain"/>
    <property type="match status" value="1"/>
</dbReference>
<dbReference type="InterPro" id="IPR042092">
    <property type="entry name" value="PsdUridine_s_RsuA/RluB/E/F_cat"/>
</dbReference>
<dbReference type="InterPro" id="IPR020103">
    <property type="entry name" value="PsdUridine_synth_cat_dom_sf"/>
</dbReference>
<dbReference type="InterPro" id="IPR006145">
    <property type="entry name" value="PsdUridine_synth_RsuA/RluA"/>
</dbReference>
<dbReference type="InterPro" id="IPR000748">
    <property type="entry name" value="PsdUridine_synth_RsuA/RluB/E/F"/>
</dbReference>
<dbReference type="InterPro" id="IPR018496">
    <property type="entry name" value="PsdUridine_synth_RsuA/RluB_CS"/>
</dbReference>
<dbReference type="InterPro" id="IPR050343">
    <property type="entry name" value="RsuA_PseudoU_synthase"/>
</dbReference>
<dbReference type="InterPro" id="IPR002942">
    <property type="entry name" value="S4_RNA-bd"/>
</dbReference>
<dbReference type="InterPro" id="IPR036986">
    <property type="entry name" value="S4_RNA-bd_sf"/>
</dbReference>
<dbReference type="InterPro" id="IPR020094">
    <property type="entry name" value="TruA/RsuA/RluB/E/F_N"/>
</dbReference>
<dbReference type="NCBIfam" id="TIGR00093">
    <property type="entry name" value="pseudouridine synthase"/>
    <property type="match status" value="1"/>
</dbReference>
<dbReference type="PANTHER" id="PTHR47683">
    <property type="entry name" value="PSEUDOURIDINE SYNTHASE FAMILY PROTEIN-RELATED"/>
    <property type="match status" value="1"/>
</dbReference>
<dbReference type="PANTHER" id="PTHR47683:SF3">
    <property type="entry name" value="RIBOSOMAL LARGE SUBUNIT PSEUDOURIDINE SYNTHASE B"/>
    <property type="match status" value="1"/>
</dbReference>
<dbReference type="Pfam" id="PF00849">
    <property type="entry name" value="PseudoU_synth_2"/>
    <property type="match status" value="1"/>
</dbReference>
<dbReference type="Pfam" id="PF01479">
    <property type="entry name" value="S4"/>
    <property type="match status" value="1"/>
</dbReference>
<dbReference type="SMART" id="SM00363">
    <property type="entry name" value="S4"/>
    <property type="match status" value="1"/>
</dbReference>
<dbReference type="SUPFAM" id="SSF55174">
    <property type="entry name" value="Alpha-L RNA-binding motif"/>
    <property type="match status" value="1"/>
</dbReference>
<dbReference type="SUPFAM" id="SSF55120">
    <property type="entry name" value="Pseudouridine synthase"/>
    <property type="match status" value="1"/>
</dbReference>
<dbReference type="PROSITE" id="PS01149">
    <property type="entry name" value="PSI_RSU"/>
    <property type="match status" value="1"/>
</dbReference>
<dbReference type="PROSITE" id="PS50889">
    <property type="entry name" value="S4"/>
    <property type="match status" value="1"/>
</dbReference>